<evidence type="ECO:0000250" key="1"/>
<evidence type="ECO:0000256" key="2">
    <source>
        <dbReference type="SAM" id="MobiDB-lite"/>
    </source>
</evidence>
<evidence type="ECO:0000305" key="3"/>
<keyword id="KW-0539">Nucleus</keyword>
<accession>Q90ZK2</accession>
<reference key="1">
    <citation type="journal article" date="2002" name="Mech. Dev.">
        <title>First evidence of prothymosin in a non-mammalian vertebrate and its involvement in the spermatogenesis of the frog Rana esculenta.</title>
        <authorList>
            <person name="Aniello F."/>
            <person name="Branno M."/>
            <person name="De Rienzo G."/>
            <person name="Ferrara D."/>
            <person name="Palmiero C."/>
            <person name="Minucci S."/>
        </authorList>
    </citation>
    <scope>NUCLEOTIDE SEQUENCE [MRNA]</scope>
    <source>
        <tissue>Testis</tissue>
    </source>
</reference>
<name>PTMA_PELLE</name>
<comment type="function">
    <text>May have role in testicular activity.</text>
</comment>
<comment type="subcellular location">
    <subcellularLocation>
        <location evidence="1">Nucleus</location>
    </subcellularLocation>
</comment>
<comment type="tissue specificity">
    <text>Highly expressed in the testis.</text>
</comment>
<comment type="developmental stage">
    <text>Expression peaks in September/October in concomitance with germ cell maturation.</text>
</comment>
<comment type="similarity">
    <text evidence="3">Belongs to the pro/parathymosin family.</text>
</comment>
<protein>
    <recommendedName>
        <fullName>Prothymosin alpha</fullName>
        <shortName>Prot-alpha</shortName>
    </recommendedName>
</protein>
<organism>
    <name type="scientific">Pelophylax lessonae</name>
    <name type="common">Pool frog</name>
    <name type="synonym">Rana lessonae</name>
    <dbReference type="NCBI Taxonomy" id="45623"/>
    <lineage>
        <taxon>Eukaryota</taxon>
        <taxon>Metazoa</taxon>
        <taxon>Chordata</taxon>
        <taxon>Craniata</taxon>
        <taxon>Vertebrata</taxon>
        <taxon>Euteleostomi</taxon>
        <taxon>Amphibia</taxon>
        <taxon>Batrachia</taxon>
        <taxon>Anura</taxon>
        <taxon>Neobatrachia</taxon>
        <taxon>Ranoidea</taxon>
        <taxon>Ranidae</taxon>
        <taxon>Pelophylax</taxon>
    </lineage>
</organism>
<feature type="chain" id="PRO_0000191629" description="Prothymosin alpha">
    <location>
        <begin position="1"/>
        <end position="109"/>
    </location>
</feature>
<feature type="region of interest" description="Disordered" evidence="2">
    <location>
        <begin position="1"/>
        <end position="109"/>
    </location>
</feature>
<feature type="compositionally biased region" description="Basic and acidic residues" evidence="2">
    <location>
        <begin position="9"/>
        <end position="35"/>
    </location>
</feature>
<feature type="compositionally biased region" description="Acidic residues" evidence="2">
    <location>
        <begin position="41"/>
        <end position="81"/>
    </location>
</feature>
<feature type="compositionally biased region" description="Basic and acidic residues" evidence="2">
    <location>
        <begin position="99"/>
        <end position="109"/>
    </location>
</feature>
<sequence length="109" mass="11906">MSDTSVDASVEKTTKDLKSKDKELVEETENGKDKPANGNAENEENGEDGADNEEEEEVDEEDEEDEGEGDDDEGDEDDEADGATGKRAAEDDDEDDDVDAKKQKTDDDD</sequence>
<dbReference type="EMBL" id="AJ312835">
    <property type="protein sequence ID" value="CAC39397.1"/>
    <property type="molecule type" value="mRNA"/>
</dbReference>
<dbReference type="SMR" id="Q90ZK2"/>
<dbReference type="GO" id="GO:0005634">
    <property type="term" value="C:nucleus"/>
    <property type="evidence" value="ECO:0007669"/>
    <property type="project" value="UniProtKB-SubCell"/>
</dbReference>
<dbReference type="GO" id="GO:0042393">
    <property type="term" value="F:histone binding"/>
    <property type="evidence" value="ECO:0007669"/>
    <property type="project" value="TreeGrafter"/>
</dbReference>
<dbReference type="GO" id="GO:0043066">
    <property type="term" value="P:negative regulation of apoptotic process"/>
    <property type="evidence" value="ECO:0007669"/>
    <property type="project" value="TreeGrafter"/>
</dbReference>
<dbReference type="GO" id="GO:0045944">
    <property type="term" value="P:positive regulation of transcription by RNA polymerase II"/>
    <property type="evidence" value="ECO:0007669"/>
    <property type="project" value="TreeGrafter"/>
</dbReference>
<dbReference type="InterPro" id="IPR004931">
    <property type="entry name" value="Pro/parathymosin"/>
</dbReference>
<dbReference type="PANTHER" id="PTHR22745">
    <property type="entry name" value="PROTHYMOSIN ALPHA"/>
    <property type="match status" value="1"/>
</dbReference>
<dbReference type="PANTHER" id="PTHR22745:SF0">
    <property type="entry name" value="PROTHYMOSIN ALPHA"/>
    <property type="match status" value="1"/>
</dbReference>
<dbReference type="Pfam" id="PF03247">
    <property type="entry name" value="Prothymosin"/>
    <property type="match status" value="1"/>
</dbReference>
<proteinExistence type="evidence at transcript level"/>